<keyword id="KW-0066">ATP synthesis</keyword>
<keyword id="KW-0997">Cell inner membrane</keyword>
<keyword id="KW-1003">Cell membrane</keyword>
<keyword id="KW-0139">CF(1)</keyword>
<keyword id="KW-0375">Hydrogen ion transport</keyword>
<keyword id="KW-0406">Ion transport</keyword>
<keyword id="KW-0472">Membrane</keyword>
<keyword id="KW-0813">Transport</keyword>
<dbReference type="EMBL" id="CP000109">
    <property type="protein sequence ID" value="ABB42756.1"/>
    <property type="molecule type" value="Genomic_DNA"/>
</dbReference>
<dbReference type="SMR" id="Q31DL7"/>
<dbReference type="STRING" id="317025.Tcr_2168"/>
<dbReference type="KEGG" id="tcx:Tcr_2168"/>
<dbReference type="eggNOG" id="COG0712">
    <property type="taxonomic scope" value="Bacteria"/>
</dbReference>
<dbReference type="HOGENOM" id="CLU_085114_3_0_6"/>
<dbReference type="OrthoDB" id="9816221at2"/>
<dbReference type="GO" id="GO:0005886">
    <property type="term" value="C:plasma membrane"/>
    <property type="evidence" value="ECO:0007669"/>
    <property type="project" value="UniProtKB-SubCell"/>
</dbReference>
<dbReference type="GO" id="GO:0045259">
    <property type="term" value="C:proton-transporting ATP synthase complex"/>
    <property type="evidence" value="ECO:0007669"/>
    <property type="project" value="UniProtKB-KW"/>
</dbReference>
<dbReference type="GO" id="GO:0046933">
    <property type="term" value="F:proton-transporting ATP synthase activity, rotational mechanism"/>
    <property type="evidence" value="ECO:0007669"/>
    <property type="project" value="UniProtKB-UniRule"/>
</dbReference>
<dbReference type="Gene3D" id="1.10.520.20">
    <property type="entry name" value="N-terminal domain of the delta subunit of the F1F0-ATP synthase"/>
    <property type="match status" value="1"/>
</dbReference>
<dbReference type="HAMAP" id="MF_01416">
    <property type="entry name" value="ATP_synth_delta_bact"/>
    <property type="match status" value="1"/>
</dbReference>
<dbReference type="InterPro" id="IPR026015">
    <property type="entry name" value="ATP_synth_OSCP/delta_N_sf"/>
</dbReference>
<dbReference type="InterPro" id="IPR000711">
    <property type="entry name" value="ATPase_OSCP/dsu"/>
</dbReference>
<dbReference type="NCBIfam" id="TIGR01145">
    <property type="entry name" value="ATP_synt_delta"/>
    <property type="match status" value="1"/>
</dbReference>
<dbReference type="NCBIfam" id="NF004402">
    <property type="entry name" value="PRK05758.2-2"/>
    <property type="match status" value="1"/>
</dbReference>
<dbReference type="PANTHER" id="PTHR11910">
    <property type="entry name" value="ATP SYNTHASE DELTA CHAIN"/>
    <property type="match status" value="1"/>
</dbReference>
<dbReference type="Pfam" id="PF00213">
    <property type="entry name" value="OSCP"/>
    <property type="match status" value="1"/>
</dbReference>
<dbReference type="PRINTS" id="PR00125">
    <property type="entry name" value="ATPASEDELTA"/>
</dbReference>
<dbReference type="SUPFAM" id="SSF47928">
    <property type="entry name" value="N-terminal domain of the delta subunit of the F1F0-ATP synthase"/>
    <property type="match status" value="1"/>
</dbReference>
<organism>
    <name type="scientific">Hydrogenovibrio crunogenus (strain DSM 25203 / XCL-2)</name>
    <name type="common">Thiomicrospira crunogena</name>
    <dbReference type="NCBI Taxonomy" id="317025"/>
    <lineage>
        <taxon>Bacteria</taxon>
        <taxon>Pseudomonadati</taxon>
        <taxon>Pseudomonadota</taxon>
        <taxon>Gammaproteobacteria</taxon>
        <taxon>Thiotrichales</taxon>
        <taxon>Piscirickettsiaceae</taxon>
        <taxon>Hydrogenovibrio</taxon>
    </lineage>
</organism>
<feature type="chain" id="PRO_1000184824" description="ATP synthase subunit delta">
    <location>
        <begin position="1"/>
        <end position="178"/>
    </location>
</feature>
<sequence>MAELITIARPYAEAAFEVAKEEGKLVEWSEQLANLSAIVSDETMTAYMVNPSVTSEDVLKLLVDVMDSNLNSEVKNLLNVMAENKRLDALSEVAEVFEELKATEDKRVRATVISARKATVEQKKKLSAALNAKFDAEVEITYEEDPSLISGIKIKVGDWAIDGSALSQLNKLGAAIAQ</sequence>
<gene>
    <name evidence="1" type="primary">atpH</name>
    <name type="ordered locus">Tcr_2168</name>
</gene>
<protein>
    <recommendedName>
        <fullName evidence="1">ATP synthase subunit delta</fullName>
    </recommendedName>
    <alternativeName>
        <fullName evidence="1">ATP synthase F(1) sector subunit delta</fullName>
    </alternativeName>
    <alternativeName>
        <fullName evidence="1">F-type ATPase subunit delta</fullName>
        <shortName evidence="1">F-ATPase subunit delta</shortName>
    </alternativeName>
</protein>
<name>ATPD_HYDCU</name>
<reference key="1">
    <citation type="journal article" date="2006" name="PLoS Biol.">
        <title>The genome of deep-sea vent chemolithoautotroph Thiomicrospira crunogena XCL-2.</title>
        <authorList>
            <person name="Scott K.M."/>
            <person name="Sievert S.M."/>
            <person name="Abril F.N."/>
            <person name="Ball L.A."/>
            <person name="Barrett C.J."/>
            <person name="Blake R.A."/>
            <person name="Boller A.J."/>
            <person name="Chain P.S.G."/>
            <person name="Clark J.A."/>
            <person name="Davis C.R."/>
            <person name="Detter C."/>
            <person name="Do K.F."/>
            <person name="Dobrinski K.P."/>
            <person name="Faza B.I."/>
            <person name="Fitzpatrick K.A."/>
            <person name="Freyermuth S.K."/>
            <person name="Harmer T.L."/>
            <person name="Hauser L.J."/>
            <person name="Huegler M."/>
            <person name="Kerfeld C.A."/>
            <person name="Klotz M.G."/>
            <person name="Kong W.W."/>
            <person name="Land M."/>
            <person name="Lapidus A."/>
            <person name="Larimer F.W."/>
            <person name="Longo D.L."/>
            <person name="Lucas S."/>
            <person name="Malfatti S.A."/>
            <person name="Massey S.E."/>
            <person name="Martin D.D."/>
            <person name="McCuddin Z."/>
            <person name="Meyer F."/>
            <person name="Moore J.L."/>
            <person name="Ocampo L.H. Jr."/>
            <person name="Paul J.H."/>
            <person name="Paulsen I.T."/>
            <person name="Reep D.K."/>
            <person name="Ren Q."/>
            <person name="Ross R.L."/>
            <person name="Sato P.Y."/>
            <person name="Thomas P."/>
            <person name="Tinkham L.E."/>
            <person name="Zeruth G.T."/>
        </authorList>
    </citation>
    <scope>NUCLEOTIDE SEQUENCE [LARGE SCALE GENOMIC DNA]</scope>
    <source>
        <strain>DSM 25203 / XCL-2</strain>
    </source>
</reference>
<accession>Q31DL7</accession>
<comment type="function">
    <text evidence="1">F(1)F(0) ATP synthase produces ATP from ADP in the presence of a proton or sodium gradient. F-type ATPases consist of two structural domains, F(1) containing the extramembraneous catalytic core and F(0) containing the membrane proton channel, linked together by a central stalk and a peripheral stalk. During catalysis, ATP synthesis in the catalytic domain of F(1) is coupled via a rotary mechanism of the central stalk subunits to proton translocation.</text>
</comment>
<comment type="function">
    <text evidence="1">This protein is part of the stalk that links CF(0) to CF(1). It either transmits conformational changes from CF(0) to CF(1) or is implicated in proton conduction.</text>
</comment>
<comment type="subunit">
    <text evidence="1">F-type ATPases have 2 components, F(1) - the catalytic core - and F(0) - the membrane proton channel. F(1) has five subunits: alpha(3), beta(3), gamma(1), delta(1), epsilon(1). F(0) has three main subunits: a(1), b(2) and c(10-14). The alpha and beta chains form an alternating ring which encloses part of the gamma chain. F(1) is attached to F(0) by a central stalk formed by the gamma and epsilon chains, while a peripheral stalk is formed by the delta and b chains.</text>
</comment>
<comment type="subcellular location">
    <subcellularLocation>
        <location evidence="1">Cell inner membrane</location>
        <topology evidence="1">Peripheral membrane protein</topology>
    </subcellularLocation>
</comment>
<comment type="similarity">
    <text evidence="1">Belongs to the ATPase delta chain family.</text>
</comment>
<proteinExistence type="inferred from homology"/>
<evidence type="ECO:0000255" key="1">
    <source>
        <dbReference type="HAMAP-Rule" id="MF_01416"/>
    </source>
</evidence>